<name>TLX1_HUMAN</name>
<evidence type="ECO:0000255" key="1">
    <source>
        <dbReference type="PROSITE-ProRule" id="PRU00108"/>
    </source>
</evidence>
<evidence type="ECO:0000256" key="2">
    <source>
        <dbReference type="SAM" id="MobiDB-lite"/>
    </source>
</evidence>
<evidence type="ECO:0000269" key="3">
    <source>
    </source>
</evidence>
<evidence type="ECO:0000269" key="4">
    <source>
    </source>
</evidence>
<evidence type="ECO:0000269" key="5">
    <source>
    </source>
</evidence>
<evidence type="ECO:0000269" key="6">
    <source>
    </source>
</evidence>
<evidence type="ECO:0000303" key="7">
    <source>
    </source>
</evidence>
<evidence type="ECO:0000305" key="8"/>
<evidence type="ECO:0007744" key="9">
    <source>
    </source>
</evidence>
<proteinExistence type="evidence at protein level"/>
<comment type="function">
    <text>Controls the genesis of the spleen. Binds to the DNA sequence 5'-GGCGGTAAGTGG-3'.</text>
</comment>
<comment type="subunit">
    <text evidence="6">Interacts with MEIS1, MEIS2, PBX1, PBX2 and PBX3.</text>
</comment>
<comment type="interaction">
    <interactant intactId="EBI-2820655">
        <id>P31314</id>
    </interactant>
    <interactant intactId="EBI-1210694">
        <id>O00470</id>
        <label>MEIS1</label>
    </interactant>
    <organismsDiffer>false</organismsDiffer>
    <experiments>4</experiments>
</comment>
<comment type="interaction">
    <interactant intactId="EBI-2820655">
        <id>P31314</id>
    </interactant>
    <interactant intactId="EBI-6390216">
        <id>O14770-2</id>
        <label>MEIS2</label>
    </interactant>
    <organismsDiffer>false</organismsDiffer>
    <experiments>4</experiments>
</comment>
<comment type="interaction">
    <interactant intactId="EBI-2820655">
        <id>P31314</id>
    </interactant>
    <interactant intactId="EBI-6390251">
        <id>P40424-2</id>
        <label>PBX1</label>
    </interactant>
    <organismsDiffer>false</organismsDiffer>
    <experiments>2</experiments>
</comment>
<comment type="interaction">
    <interactant intactId="EBI-2820655">
        <id>P31314</id>
    </interactant>
    <interactant intactId="EBI-348489">
        <id>P40425</id>
        <label>PBX2</label>
    </interactant>
    <organismsDiffer>false</organismsDiffer>
    <experiments>3</experiments>
</comment>
<comment type="interaction">
    <interactant intactId="EBI-2820655">
        <id>P31314</id>
    </interactant>
    <interactant intactId="EBI-4289053">
        <id>P27577</id>
        <label>Ets1</label>
    </interactant>
    <organismsDiffer>true</organismsDiffer>
    <experiments>2</experiments>
</comment>
<comment type="subcellular location">
    <subcellularLocation>
        <location evidence="8">Nucleus</location>
    </subcellularLocation>
</comment>
<comment type="alternative products">
    <event type="alternative splicing"/>
    <isoform>
        <id>P31314-1</id>
        <name>1</name>
        <sequence type="displayed"/>
    </isoform>
    <isoform>
        <id>P31314-2</id>
        <name>2</name>
        <sequence type="described" ref="VSP_043068"/>
    </isoform>
</comment>
<comment type="disease">
    <text evidence="3 4 5">A chromosomal aberration involving TLX1 may be a cause of a form of T-cell acute lymphoblastic leukemia (T-ALL). Translocation t(10;14)(q24;q11) with TCRD.</text>
</comment>
<comment type="miscellaneous">
    <text>TLX1 is oriented in a head-to-head manner with TDI. Both genes share the same promoter with robust bidirectional activity.</text>
</comment>
<reference key="1">
    <citation type="journal article" date="1991" name="EMBO J.">
        <title>The tcl-3 proto-oncogene altered by chromosomal translocation in T-cell leukemia codes for a homeobox protein.</title>
        <authorList>
            <person name="Lu M."/>
            <person name="Gong Z."/>
            <person name="Shen W."/>
            <person name="Ho A.D."/>
        </authorList>
    </citation>
    <scope>NUCLEOTIDE SEQUENCE [MRNA] (ISOFORM 1)</scope>
    <scope>CHROMOSOMAL TRANSLOCATION WITH TCRD</scope>
    <source>
        <tissue>T-cell</tissue>
    </source>
</reference>
<reference key="2">
    <citation type="journal article" date="1991" name="Proc. Natl. Acad. Sci. U.S.A.">
        <title>HOX11, a homeobox-containing T-cell oncogene on human chromosome 10q24.</title>
        <authorList>
            <person name="Kennedy M.A."/>
            <person name="Gonzalez-Sarmiento R."/>
            <person name="Kees U.R."/>
            <person name="Lampert F."/>
            <person name="Dear T.N."/>
            <person name="Boehm T."/>
            <person name="Rabbitts T.H."/>
        </authorList>
    </citation>
    <scope>NUCLEOTIDE SEQUENCE [MRNA] (ISOFORM 1)</scope>
    <scope>CHROMOSOMAL TRANSLOCATION WITH TCRD</scope>
    <source>
        <tissue>T-cell</tissue>
    </source>
</reference>
<reference key="3">
    <citation type="journal article" date="1991" name="Science">
        <title>Deregulation of a homeobox gene, HOX11, by the t(10;14) in T cell leukemia.</title>
        <authorList>
            <person name="Hatano M."/>
            <person name="Roberts C.W."/>
            <person name="Minden M."/>
            <person name="Crist W.M."/>
            <person name="Korsmeyer S.J."/>
        </authorList>
    </citation>
    <scope>NUCLEOTIDE SEQUENCE [MRNA] (ISOFORM 1)</scope>
    <scope>CHROMOSOMAL TRANSLOCATION WITH TCRD</scope>
</reference>
<reference key="4">
    <citation type="journal article" date="1992" name="Oncogene">
        <title>Genomic organization of the putative human homeobox proto-oncogene HOX-11 (TCL-3) and its endogenous expression in T cells.</title>
        <authorList>
            <person name="Lu M."/>
            <person name="Zhang N."/>
            <person name="Ho A.D."/>
        </authorList>
    </citation>
    <scope>NUCLEOTIDE SEQUENCE [GENOMIC DNA]</scope>
</reference>
<reference key="5">
    <citation type="journal article" date="1999" name="Gene">
        <title>Sequence of 10q24 locus surrounding the HOX11 oncogene reveals a new gene HUG1 expressed in a T-ALL cell line.</title>
        <authorList>
            <person name="Watt P.M."/>
            <person name="Ranford P.R."/>
            <person name="Kees U.R."/>
        </authorList>
    </citation>
    <scope>NUCLEOTIDE SEQUENCE [GENOMIC DNA]</scope>
</reference>
<reference key="6">
    <citation type="journal article" date="2004" name="Nature">
        <title>The DNA sequence and comparative analysis of human chromosome 10.</title>
        <authorList>
            <person name="Deloukas P."/>
            <person name="Earthrowl M.E."/>
            <person name="Grafham D.V."/>
            <person name="Rubenfield M."/>
            <person name="French L."/>
            <person name="Steward C.A."/>
            <person name="Sims S.K."/>
            <person name="Jones M.C."/>
            <person name="Searle S."/>
            <person name="Scott C."/>
            <person name="Howe K."/>
            <person name="Hunt S.E."/>
            <person name="Andrews T.D."/>
            <person name="Gilbert J.G.R."/>
            <person name="Swarbreck D."/>
            <person name="Ashurst J.L."/>
            <person name="Taylor A."/>
            <person name="Battles J."/>
            <person name="Bird C.P."/>
            <person name="Ainscough R."/>
            <person name="Almeida J.P."/>
            <person name="Ashwell R.I.S."/>
            <person name="Ambrose K.D."/>
            <person name="Babbage A.K."/>
            <person name="Bagguley C.L."/>
            <person name="Bailey J."/>
            <person name="Banerjee R."/>
            <person name="Bates K."/>
            <person name="Beasley H."/>
            <person name="Bray-Allen S."/>
            <person name="Brown A.J."/>
            <person name="Brown J.Y."/>
            <person name="Burford D.C."/>
            <person name="Burrill W."/>
            <person name="Burton J."/>
            <person name="Cahill P."/>
            <person name="Camire D."/>
            <person name="Carter N.P."/>
            <person name="Chapman J.C."/>
            <person name="Clark S.Y."/>
            <person name="Clarke G."/>
            <person name="Clee C.M."/>
            <person name="Clegg S."/>
            <person name="Corby N."/>
            <person name="Coulson A."/>
            <person name="Dhami P."/>
            <person name="Dutta I."/>
            <person name="Dunn M."/>
            <person name="Faulkner L."/>
            <person name="Frankish A."/>
            <person name="Frankland J.A."/>
            <person name="Garner P."/>
            <person name="Garnett J."/>
            <person name="Gribble S."/>
            <person name="Griffiths C."/>
            <person name="Grocock R."/>
            <person name="Gustafson E."/>
            <person name="Hammond S."/>
            <person name="Harley J.L."/>
            <person name="Hart E."/>
            <person name="Heath P.D."/>
            <person name="Ho T.P."/>
            <person name="Hopkins B."/>
            <person name="Horne J."/>
            <person name="Howden P.J."/>
            <person name="Huckle E."/>
            <person name="Hynds C."/>
            <person name="Johnson C."/>
            <person name="Johnson D."/>
            <person name="Kana A."/>
            <person name="Kay M."/>
            <person name="Kimberley A.M."/>
            <person name="Kershaw J.K."/>
            <person name="Kokkinaki M."/>
            <person name="Laird G.K."/>
            <person name="Lawlor S."/>
            <person name="Lee H.M."/>
            <person name="Leongamornlert D.A."/>
            <person name="Laird G."/>
            <person name="Lloyd C."/>
            <person name="Lloyd D.M."/>
            <person name="Loveland J."/>
            <person name="Lovell J."/>
            <person name="McLaren S."/>
            <person name="McLay K.E."/>
            <person name="McMurray A."/>
            <person name="Mashreghi-Mohammadi M."/>
            <person name="Matthews L."/>
            <person name="Milne S."/>
            <person name="Nickerson T."/>
            <person name="Nguyen M."/>
            <person name="Overton-Larty E."/>
            <person name="Palmer S.A."/>
            <person name="Pearce A.V."/>
            <person name="Peck A.I."/>
            <person name="Pelan S."/>
            <person name="Phillimore B."/>
            <person name="Porter K."/>
            <person name="Rice C.M."/>
            <person name="Rogosin A."/>
            <person name="Ross M.T."/>
            <person name="Sarafidou T."/>
            <person name="Sehra H.K."/>
            <person name="Shownkeen R."/>
            <person name="Skuce C.D."/>
            <person name="Smith M."/>
            <person name="Standring L."/>
            <person name="Sycamore N."/>
            <person name="Tester J."/>
            <person name="Thorpe A."/>
            <person name="Torcasso W."/>
            <person name="Tracey A."/>
            <person name="Tromans A."/>
            <person name="Tsolas J."/>
            <person name="Wall M."/>
            <person name="Walsh J."/>
            <person name="Wang H."/>
            <person name="Weinstock K."/>
            <person name="West A.P."/>
            <person name="Willey D.L."/>
            <person name="Whitehead S.L."/>
            <person name="Wilming L."/>
            <person name="Wray P.W."/>
            <person name="Young L."/>
            <person name="Chen Y."/>
            <person name="Lovering R.C."/>
            <person name="Moschonas N.K."/>
            <person name="Siebert R."/>
            <person name="Fechtel K."/>
            <person name="Bentley D."/>
            <person name="Durbin R.M."/>
            <person name="Hubbard T."/>
            <person name="Doucette-Stamm L."/>
            <person name="Beck S."/>
            <person name="Smith D.R."/>
            <person name="Rogers J."/>
        </authorList>
    </citation>
    <scope>NUCLEOTIDE SEQUENCE [LARGE SCALE GENOMIC DNA]</scope>
</reference>
<reference key="7">
    <citation type="submission" date="2005-09" db="EMBL/GenBank/DDBJ databases">
        <authorList>
            <person name="Mural R.J."/>
            <person name="Istrail S."/>
            <person name="Sutton G.G."/>
            <person name="Florea L."/>
            <person name="Halpern A.L."/>
            <person name="Mobarry C.M."/>
            <person name="Lippert R."/>
            <person name="Walenz B."/>
            <person name="Shatkay H."/>
            <person name="Dew I."/>
            <person name="Miller J.R."/>
            <person name="Flanigan M.J."/>
            <person name="Edwards N.J."/>
            <person name="Bolanos R."/>
            <person name="Fasulo D."/>
            <person name="Halldorsson B.V."/>
            <person name="Hannenhalli S."/>
            <person name="Turner R."/>
            <person name="Yooseph S."/>
            <person name="Lu F."/>
            <person name="Nusskern D.R."/>
            <person name="Shue B.C."/>
            <person name="Zheng X.H."/>
            <person name="Zhong F."/>
            <person name="Delcher A.L."/>
            <person name="Huson D.H."/>
            <person name="Kravitz S.A."/>
            <person name="Mouchard L."/>
            <person name="Reinert K."/>
            <person name="Remington K.A."/>
            <person name="Clark A.G."/>
            <person name="Waterman M.S."/>
            <person name="Eichler E.E."/>
            <person name="Adams M.D."/>
            <person name="Hunkapiller M.W."/>
            <person name="Myers E.W."/>
            <person name="Venter J.C."/>
        </authorList>
    </citation>
    <scope>NUCLEOTIDE SEQUENCE [LARGE SCALE GENOMIC DNA]</scope>
</reference>
<reference key="8">
    <citation type="journal article" date="2004" name="Genome Res.">
        <title>The status, quality, and expansion of the NIH full-length cDNA project: the Mammalian Gene Collection (MGC).</title>
        <authorList>
            <consortium name="The MGC Project Team"/>
        </authorList>
    </citation>
    <scope>NUCLEOTIDE SEQUENCE [LARGE SCALE MRNA] (ISOFORM 2)</scope>
</reference>
<reference key="9">
    <citation type="journal article" date="1998" name="Oncogene">
        <title>Multiple negative elements contribute to repression of the HOX11 proto-oncogene.</title>
        <authorList>
            <person name="Brake R.L."/>
            <person name="Kees U.R."/>
            <person name="Watt P.M."/>
        </authorList>
    </citation>
    <scope>NUCLEOTIDE SEQUENCE [GENOMIC DNA] OF 1-64</scope>
</reference>
<reference key="10">
    <citation type="journal article" date="1994" name="Gene">
        <title>Identification of homeobox genes expressed in human haemopoietic progenitor cells.</title>
        <authorList>
            <person name="Moretti P."/>
            <person name="Simmons P."/>
            <person name="Thomas P."/>
            <person name="Haylock D."/>
            <person name="Rathjen P."/>
            <person name="Vadas M."/>
            <person name="D'Andrea R."/>
        </authorList>
    </citation>
    <scope>NUCLEOTIDE SEQUENCE [MRNA] OF 209-247 (ISOFORM 1/2)</scope>
    <source>
        <tissue>Bone marrow</tissue>
    </source>
</reference>
<reference key="11">
    <citation type="journal article" date="2007" name="Gene">
        <title>A promoter with bidirectional activity is located between TLX1/HOX11 and a divergently transcribed novel human gene.</title>
        <authorList>
            <person name="Greene W.K."/>
            <person name="Sontani Y."/>
            <person name="Sharp M.A."/>
            <person name="Dunn D.S."/>
            <person name="Kees U.R."/>
            <person name="Bellgard M.I."/>
        </authorList>
    </citation>
    <scope>IDENTIFICATION</scope>
</reference>
<reference key="12">
    <citation type="journal article" date="2009" name="Science">
        <title>Lysine acetylation targets protein complexes and co-regulates major cellular functions.</title>
        <authorList>
            <person name="Choudhary C."/>
            <person name="Kumar C."/>
            <person name="Gnad F."/>
            <person name="Nielsen M.L."/>
            <person name="Rehman M."/>
            <person name="Walther T.C."/>
            <person name="Olsen J.V."/>
            <person name="Mann M."/>
        </authorList>
    </citation>
    <scope>ACETYLATION [LARGE SCALE ANALYSIS] AT LYS-236</scope>
    <scope>IDENTIFICATION BY MASS SPECTROMETRY [LARGE SCALE ANALYSIS]</scope>
</reference>
<reference key="13">
    <citation type="journal article" date="2010" name="Leuk. Res.">
        <title>MEIS proteins as partners of the TLX1/HOX11 oncoprotein.</title>
        <authorList>
            <person name="Milech N."/>
            <person name="Gottardo N.G."/>
            <person name="Ford J."/>
            <person name="D'Souza D."/>
            <person name="Greene W.K."/>
            <person name="Kees U.R."/>
            <person name="Watt P.M."/>
        </authorList>
    </citation>
    <scope>INTERACTION WITH MEIS1; MEIS2; PBX1; PBX2 AND PBX3</scope>
</reference>
<keyword id="KW-0007">Acetylation</keyword>
<keyword id="KW-0025">Alternative splicing</keyword>
<keyword id="KW-0160">Chromosomal rearrangement</keyword>
<keyword id="KW-0217">Developmental protein</keyword>
<keyword id="KW-0238">DNA-binding</keyword>
<keyword id="KW-0371">Homeobox</keyword>
<keyword id="KW-0539">Nucleus</keyword>
<keyword id="KW-1267">Proteomics identification</keyword>
<keyword id="KW-0656">Proto-oncogene</keyword>
<keyword id="KW-1185">Reference proteome</keyword>
<feature type="chain" id="PRO_0000049333" description="T-cell leukemia homeobox protein 1">
    <location>
        <begin position="1"/>
        <end position="330"/>
    </location>
</feature>
<feature type="DNA-binding region" description="Homeobox" evidence="1">
    <location>
        <begin position="201"/>
        <end position="260"/>
    </location>
</feature>
<feature type="region of interest" description="Disordered" evidence="2">
    <location>
        <begin position="186"/>
        <end position="207"/>
    </location>
</feature>
<feature type="modified residue" description="N6-acetyllysine" evidence="9">
    <location>
        <position position="236"/>
    </location>
</feature>
<feature type="splice variant" id="VSP_043068" description="In isoform 2." evidence="7">
    <location>
        <begin position="258"/>
        <end position="330"/>
    </location>
</feature>
<feature type="sequence conflict" description="In Ref. 5; CAA08834." evidence="8" ref="5">
    <original>A</original>
    <variation>T</variation>
    <location>
        <position position="71"/>
    </location>
</feature>
<feature type="sequence conflict" description="In Ref. 3; AAB19293." evidence="8" ref="3">
    <original>L</original>
    <variation>R</variation>
    <location>
        <position position="276"/>
    </location>
</feature>
<gene>
    <name type="primary">TLX1</name>
    <name type="synonym">HOX11</name>
    <name type="synonym">TCL3</name>
</gene>
<organism>
    <name type="scientific">Homo sapiens</name>
    <name type="common">Human</name>
    <dbReference type="NCBI Taxonomy" id="9606"/>
    <lineage>
        <taxon>Eukaryota</taxon>
        <taxon>Metazoa</taxon>
        <taxon>Chordata</taxon>
        <taxon>Craniata</taxon>
        <taxon>Vertebrata</taxon>
        <taxon>Euteleostomi</taxon>
        <taxon>Mammalia</taxon>
        <taxon>Eutheria</taxon>
        <taxon>Euarchontoglires</taxon>
        <taxon>Primates</taxon>
        <taxon>Haplorrhini</taxon>
        <taxon>Catarrhini</taxon>
        <taxon>Hominidae</taxon>
        <taxon>Homo</taxon>
    </lineage>
</organism>
<dbReference type="EMBL" id="M62626">
    <property type="protein sequence ID" value="AAA36719.1"/>
    <property type="molecule type" value="mRNA"/>
</dbReference>
<dbReference type="EMBL" id="M75952">
    <property type="protein sequence ID" value="AAA58662.1"/>
    <property type="molecule type" value="mRNA"/>
</dbReference>
<dbReference type="EMBL" id="S38742">
    <property type="protein sequence ID" value="AAB19293.1"/>
    <property type="molecule type" value="mRNA"/>
</dbReference>
<dbReference type="EMBL" id="AJ009794">
    <property type="protein sequence ID" value="CAA08834.1"/>
    <property type="molecule type" value="Genomic_DNA"/>
</dbReference>
<dbReference type="EMBL" id="AL357395">
    <property type="status" value="NOT_ANNOTATED_CDS"/>
    <property type="molecule type" value="Genomic_DNA"/>
</dbReference>
<dbReference type="EMBL" id="CH471066">
    <property type="protein sequence ID" value="EAW49778.1"/>
    <property type="molecule type" value="Genomic_DNA"/>
</dbReference>
<dbReference type="EMBL" id="BC130530">
    <property type="protein sequence ID" value="AAI30531.1"/>
    <property type="molecule type" value="mRNA"/>
</dbReference>
<dbReference type="EMBL" id="AF067443">
    <property type="protein sequence ID" value="AAG10096.1"/>
    <property type="molecule type" value="Genomic_DNA"/>
</dbReference>
<dbReference type="CCDS" id="CCDS55725.1">
    <molecule id="P31314-2"/>
</dbReference>
<dbReference type="CCDS" id="CCDS7510.1">
    <molecule id="P31314-1"/>
</dbReference>
<dbReference type="PIR" id="A40855">
    <property type="entry name" value="A40855"/>
</dbReference>
<dbReference type="RefSeq" id="NP_001182446.1">
    <molecule id="P31314-2"/>
    <property type="nucleotide sequence ID" value="NM_001195517.2"/>
</dbReference>
<dbReference type="RefSeq" id="NP_005512.1">
    <molecule id="P31314-1"/>
    <property type="nucleotide sequence ID" value="NM_005521.4"/>
</dbReference>
<dbReference type="SMR" id="P31314"/>
<dbReference type="BioGRID" id="109435">
    <property type="interactions" value="169"/>
</dbReference>
<dbReference type="CORUM" id="P31314"/>
<dbReference type="DIP" id="DIP-155N"/>
<dbReference type="ELM" id="P31314"/>
<dbReference type="FunCoup" id="P31314">
    <property type="interactions" value="1136"/>
</dbReference>
<dbReference type="IntAct" id="P31314">
    <property type="interactions" value="168"/>
</dbReference>
<dbReference type="STRING" id="9606.ENSP00000359215"/>
<dbReference type="iPTMnet" id="P31314"/>
<dbReference type="PhosphoSitePlus" id="P31314"/>
<dbReference type="BioMuta" id="TLX1"/>
<dbReference type="DMDM" id="399982"/>
<dbReference type="MassIVE" id="P31314"/>
<dbReference type="PaxDb" id="9606-ENSP00000359215"/>
<dbReference type="PeptideAtlas" id="P31314"/>
<dbReference type="ProteomicsDB" id="54778">
    <molecule id="P31314-1"/>
</dbReference>
<dbReference type="ProteomicsDB" id="54779">
    <molecule id="P31314-2"/>
</dbReference>
<dbReference type="Antibodypedia" id="31271">
    <property type="antibodies" value="124 antibodies from 24 providers"/>
</dbReference>
<dbReference type="DNASU" id="3195"/>
<dbReference type="Ensembl" id="ENST00000370196.11">
    <molecule id="P31314-1"/>
    <property type="protein sequence ID" value="ENSP00000359215.6"/>
    <property type="gene ID" value="ENSG00000107807.13"/>
</dbReference>
<dbReference type="Ensembl" id="ENST00000467928.2">
    <molecule id="P31314-2"/>
    <property type="protein sequence ID" value="ENSP00000434914.2"/>
    <property type="gene ID" value="ENSG00000107807.13"/>
</dbReference>
<dbReference type="GeneID" id="3195"/>
<dbReference type="KEGG" id="hsa:3195"/>
<dbReference type="MANE-Select" id="ENST00000370196.11">
    <property type="protein sequence ID" value="ENSP00000359215.6"/>
    <property type="RefSeq nucleotide sequence ID" value="NM_005521.4"/>
    <property type="RefSeq protein sequence ID" value="NP_005512.1"/>
</dbReference>
<dbReference type="UCSC" id="uc001ksw.4">
    <molecule id="P31314-1"/>
    <property type="organism name" value="human"/>
</dbReference>
<dbReference type="AGR" id="HGNC:5056"/>
<dbReference type="CTD" id="3195"/>
<dbReference type="DisGeNET" id="3195"/>
<dbReference type="GeneCards" id="TLX1"/>
<dbReference type="HGNC" id="HGNC:5056">
    <property type="gene designation" value="TLX1"/>
</dbReference>
<dbReference type="HPA" id="ENSG00000107807">
    <property type="expression patterns" value="Group enriched (lymphoid tissue, salivary gland)"/>
</dbReference>
<dbReference type="MalaCards" id="TLX1"/>
<dbReference type="MIM" id="186770">
    <property type="type" value="gene+phenotype"/>
</dbReference>
<dbReference type="neXtProt" id="NX_P31314"/>
<dbReference type="OpenTargets" id="ENSG00000107807"/>
<dbReference type="Orphanet" id="99861">
    <property type="disease" value="Precursor T-cell acute lymphoblastic leukemia"/>
</dbReference>
<dbReference type="PharmGKB" id="PA35095"/>
<dbReference type="VEuPathDB" id="HostDB:ENSG00000107807"/>
<dbReference type="eggNOG" id="KOG0488">
    <property type="taxonomic scope" value="Eukaryota"/>
</dbReference>
<dbReference type="GeneTree" id="ENSGT00940000158698"/>
<dbReference type="HOGENOM" id="CLU_053409_2_0_1"/>
<dbReference type="InParanoid" id="P31314"/>
<dbReference type="OMA" id="QANRLLM"/>
<dbReference type="OrthoDB" id="9451579at2759"/>
<dbReference type="PAN-GO" id="P31314">
    <property type="GO annotations" value="5 GO annotations based on evolutionary models"/>
</dbReference>
<dbReference type="PhylomeDB" id="P31314"/>
<dbReference type="TreeFam" id="TF325347"/>
<dbReference type="PathwayCommons" id="P31314"/>
<dbReference type="SignaLink" id="P31314"/>
<dbReference type="SIGNOR" id="P31314"/>
<dbReference type="BioGRID-ORCS" id="3195">
    <property type="hits" value="8 hits in 1168 CRISPR screens"/>
</dbReference>
<dbReference type="ChiTaRS" id="TLX1">
    <property type="organism name" value="human"/>
</dbReference>
<dbReference type="GeneWiki" id="TLX1"/>
<dbReference type="GenomeRNAi" id="3195"/>
<dbReference type="Pharos" id="P31314">
    <property type="development level" value="Tbio"/>
</dbReference>
<dbReference type="PRO" id="PR:P31314"/>
<dbReference type="Proteomes" id="UP000005640">
    <property type="component" value="Chromosome 10"/>
</dbReference>
<dbReference type="RNAct" id="P31314">
    <property type="molecule type" value="protein"/>
</dbReference>
<dbReference type="Bgee" id="ENSG00000107807">
    <property type="expression patterns" value="Expressed in spleen and 57 other cell types or tissues"/>
</dbReference>
<dbReference type="ExpressionAtlas" id="P31314">
    <property type="expression patterns" value="baseline and differential"/>
</dbReference>
<dbReference type="GO" id="GO:0000785">
    <property type="term" value="C:chromatin"/>
    <property type="evidence" value="ECO:0000247"/>
    <property type="project" value="NTNU_SB"/>
</dbReference>
<dbReference type="GO" id="GO:0005634">
    <property type="term" value="C:nucleus"/>
    <property type="evidence" value="ECO:0000318"/>
    <property type="project" value="GO_Central"/>
</dbReference>
<dbReference type="GO" id="GO:0001228">
    <property type="term" value="F:DNA-binding transcription activator activity, RNA polymerase II-specific"/>
    <property type="evidence" value="ECO:0007669"/>
    <property type="project" value="Ensembl"/>
</dbReference>
<dbReference type="GO" id="GO:0000981">
    <property type="term" value="F:DNA-binding transcription factor activity, RNA polymerase II-specific"/>
    <property type="evidence" value="ECO:0000247"/>
    <property type="project" value="NTNU_SB"/>
</dbReference>
<dbReference type="GO" id="GO:0000978">
    <property type="term" value="F:RNA polymerase II cis-regulatory region sequence-specific DNA binding"/>
    <property type="evidence" value="ECO:0007669"/>
    <property type="project" value="Ensembl"/>
</dbReference>
<dbReference type="GO" id="GO:0048513">
    <property type="term" value="P:animal organ development"/>
    <property type="evidence" value="ECO:0000318"/>
    <property type="project" value="GO_Central"/>
</dbReference>
<dbReference type="GO" id="GO:0006357">
    <property type="term" value="P:regulation of transcription by RNA polymerase II"/>
    <property type="evidence" value="ECO:0000318"/>
    <property type="project" value="GO_Central"/>
</dbReference>
<dbReference type="CDD" id="cd00086">
    <property type="entry name" value="homeodomain"/>
    <property type="match status" value="1"/>
</dbReference>
<dbReference type="FunFam" id="1.10.10.60:FF:000040">
    <property type="entry name" value="T-cell leukemia homeobox protein 3"/>
    <property type="match status" value="1"/>
</dbReference>
<dbReference type="Gene3D" id="1.10.10.60">
    <property type="entry name" value="Homeodomain-like"/>
    <property type="match status" value="1"/>
</dbReference>
<dbReference type="InterPro" id="IPR001356">
    <property type="entry name" value="HD"/>
</dbReference>
<dbReference type="InterPro" id="IPR020479">
    <property type="entry name" value="HD_metazoa"/>
</dbReference>
<dbReference type="InterPro" id="IPR017970">
    <property type="entry name" value="Homeobox_CS"/>
</dbReference>
<dbReference type="InterPro" id="IPR009057">
    <property type="entry name" value="Homeodomain-like_sf"/>
</dbReference>
<dbReference type="InterPro" id="IPR042247">
    <property type="entry name" value="TLX1/2/3"/>
</dbReference>
<dbReference type="PANTHER" id="PTHR45921">
    <property type="entry name" value="IP01054P"/>
    <property type="match status" value="1"/>
</dbReference>
<dbReference type="PANTHER" id="PTHR45921:SF2">
    <property type="entry name" value="T-CELL LEUKEMIA HOMEOBOX PROTEIN 1"/>
    <property type="match status" value="1"/>
</dbReference>
<dbReference type="Pfam" id="PF00046">
    <property type="entry name" value="Homeodomain"/>
    <property type="match status" value="1"/>
</dbReference>
<dbReference type="PRINTS" id="PR00024">
    <property type="entry name" value="HOMEOBOX"/>
</dbReference>
<dbReference type="SMART" id="SM00389">
    <property type="entry name" value="HOX"/>
    <property type="match status" value="1"/>
</dbReference>
<dbReference type="SUPFAM" id="SSF46689">
    <property type="entry name" value="Homeodomain-like"/>
    <property type="match status" value="1"/>
</dbReference>
<dbReference type="PROSITE" id="PS00027">
    <property type="entry name" value="HOMEOBOX_1"/>
    <property type="match status" value="1"/>
</dbReference>
<dbReference type="PROSITE" id="PS50071">
    <property type="entry name" value="HOMEOBOX_2"/>
    <property type="match status" value="1"/>
</dbReference>
<sequence length="330" mass="34365">MEHLGPHHLHPGHAEPISFGIDQILNSPDQGGCMGPASRLQDGEYGLGCLVGGAYTYGGGGSAAATGAGGAGAYGTGGPGGPGGPAGGGGACSMGPLTGSYNVNMALAGGPGPGGGGGSSGGAGALSAAGVIRVPAHRPLAGAVAHPQPLATGLPTVPSVPAMPGVNNLTGLTFPWMESNRRYTKDRFTGHPYQNRTPPKKKKPRTSFTRLQICELEKRFHRQKYLASAERAALAKALKMTDAQVKTWFQNRRTKWRRQTAEEREAERQQANRILLQLQQEAFQKSLAQPLPADPLCVHNSSLFALQNLQPWSDDSTKITSVTSVASACE</sequence>
<accession>P31314</accession>
<accession>A1L4G3</accession>
<accession>O75699</accession>
<accession>Q5VXP2</accession>
<accession>Q9HCA0</accession>
<accession>Q9UD59</accession>
<protein>
    <recommendedName>
        <fullName>T-cell leukemia homeobox protein 1</fullName>
    </recommendedName>
    <alternativeName>
        <fullName>Homeobox protein Hox-11</fullName>
    </alternativeName>
    <alternativeName>
        <fullName>Proto-oncogene TCL-3</fullName>
    </alternativeName>
    <alternativeName>
        <fullName>T-cell leukemia/lymphoma protein 3</fullName>
    </alternativeName>
</protein>